<gene>
    <name evidence="1" type="primary">nuoH</name>
    <name type="ordered locus">HEAR1819</name>
</gene>
<protein>
    <recommendedName>
        <fullName evidence="1">NADH-quinone oxidoreductase subunit H</fullName>
        <ecNumber evidence="1">7.1.1.-</ecNumber>
    </recommendedName>
    <alternativeName>
        <fullName evidence="1">NADH dehydrogenase I subunit H</fullName>
    </alternativeName>
    <alternativeName>
        <fullName evidence="1">NDH-1 subunit H</fullName>
    </alternativeName>
</protein>
<keyword id="KW-0997">Cell inner membrane</keyword>
<keyword id="KW-1003">Cell membrane</keyword>
<keyword id="KW-0472">Membrane</keyword>
<keyword id="KW-0520">NAD</keyword>
<keyword id="KW-0874">Quinone</keyword>
<keyword id="KW-1185">Reference proteome</keyword>
<keyword id="KW-1278">Translocase</keyword>
<keyword id="KW-0812">Transmembrane</keyword>
<keyword id="KW-1133">Transmembrane helix</keyword>
<keyword id="KW-0830">Ubiquinone</keyword>
<proteinExistence type="inferred from homology"/>
<feature type="chain" id="PRO_0000299938" description="NADH-quinone oxidoreductase subunit H">
    <location>
        <begin position="1"/>
        <end position="357"/>
    </location>
</feature>
<feature type="transmembrane region" description="Helical" evidence="1">
    <location>
        <begin position="20"/>
        <end position="40"/>
    </location>
</feature>
<feature type="transmembrane region" description="Helical" evidence="1">
    <location>
        <begin position="92"/>
        <end position="112"/>
    </location>
</feature>
<feature type="transmembrane region" description="Helical" evidence="1">
    <location>
        <begin position="127"/>
        <end position="147"/>
    </location>
</feature>
<feature type="transmembrane region" description="Helical" evidence="1">
    <location>
        <begin position="165"/>
        <end position="185"/>
    </location>
</feature>
<feature type="transmembrane region" description="Helical" evidence="1">
    <location>
        <begin position="203"/>
        <end position="223"/>
    </location>
</feature>
<feature type="transmembrane region" description="Helical" evidence="1">
    <location>
        <begin position="259"/>
        <end position="279"/>
    </location>
</feature>
<feature type="transmembrane region" description="Helical" evidence="1">
    <location>
        <begin position="294"/>
        <end position="314"/>
    </location>
</feature>
<feature type="transmembrane region" description="Helical" evidence="1">
    <location>
        <begin position="329"/>
        <end position="349"/>
    </location>
</feature>
<sequence>MDQLLASVHAAGHSFLGDYWLLVWTLVKIVAVVLPLMGCVAYLTLWERKVIGWMHVRHGPNRTGPAGLLQPIADALKLLLKEIVVPAKSSKALFVIAPIMTIMPALAAWAVIPFGPEAALANVNAGLLFVMAITSLEVYGVIVAGWASNSKYAFLGAMRASAQMISYEIAMGFVLVIVLMVSGSLNLSEIVMLQTSGRFADMGLTFLSWNWLPLLPMFVIYIISGTAELNRHPFDVVEGESEIVAGHMVEYSGMSFAMFFLAEYANMILISMMATLMFLGGWSSPIDAMPFTWIPGWIWLGIKTLFVVTLFIWFRASFPRYRYDQIMRLGWKVFIPLTLVYLLIVAIWMKTPWNIWH</sequence>
<comment type="function">
    <text evidence="1">NDH-1 shuttles electrons from NADH, via FMN and iron-sulfur (Fe-S) centers, to quinones in the respiratory chain. The immediate electron acceptor for the enzyme in this species is believed to be ubiquinone. Couples the redox reaction to proton translocation (for every two electrons transferred, four hydrogen ions are translocated across the cytoplasmic membrane), and thus conserves the redox energy in a proton gradient. This subunit may bind ubiquinone.</text>
</comment>
<comment type="catalytic activity">
    <reaction evidence="1">
        <text>a quinone + NADH + 5 H(+)(in) = a quinol + NAD(+) + 4 H(+)(out)</text>
        <dbReference type="Rhea" id="RHEA:57888"/>
        <dbReference type="ChEBI" id="CHEBI:15378"/>
        <dbReference type="ChEBI" id="CHEBI:24646"/>
        <dbReference type="ChEBI" id="CHEBI:57540"/>
        <dbReference type="ChEBI" id="CHEBI:57945"/>
        <dbReference type="ChEBI" id="CHEBI:132124"/>
    </reaction>
</comment>
<comment type="subunit">
    <text evidence="1">NDH-1 is composed of 14 different subunits. Subunits NuoA, H, J, K, L, M, N constitute the membrane sector of the complex.</text>
</comment>
<comment type="subcellular location">
    <subcellularLocation>
        <location evidence="1">Cell inner membrane</location>
        <topology evidence="1">Multi-pass membrane protein</topology>
    </subcellularLocation>
</comment>
<comment type="similarity">
    <text evidence="1">Belongs to the complex I subunit 1 family.</text>
</comment>
<organism>
    <name type="scientific">Herminiimonas arsenicoxydans</name>
    <dbReference type="NCBI Taxonomy" id="204773"/>
    <lineage>
        <taxon>Bacteria</taxon>
        <taxon>Pseudomonadati</taxon>
        <taxon>Pseudomonadota</taxon>
        <taxon>Betaproteobacteria</taxon>
        <taxon>Burkholderiales</taxon>
        <taxon>Oxalobacteraceae</taxon>
        <taxon>Herminiimonas</taxon>
    </lineage>
</organism>
<accession>A4G637</accession>
<evidence type="ECO:0000255" key="1">
    <source>
        <dbReference type="HAMAP-Rule" id="MF_01350"/>
    </source>
</evidence>
<reference key="1">
    <citation type="journal article" date="2007" name="PLoS Genet.">
        <title>A tale of two oxidation states: bacterial colonization of arsenic-rich environments.</title>
        <authorList>
            <person name="Muller D."/>
            <person name="Medigue C."/>
            <person name="Koechler S."/>
            <person name="Barbe V."/>
            <person name="Barakat M."/>
            <person name="Talla E."/>
            <person name="Bonnefoy V."/>
            <person name="Krin E."/>
            <person name="Arsene-Ploetze F."/>
            <person name="Carapito C."/>
            <person name="Chandler M."/>
            <person name="Cournoyer B."/>
            <person name="Cruveiller S."/>
            <person name="Dossat C."/>
            <person name="Duval S."/>
            <person name="Heymann M."/>
            <person name="Leize E."/>
            <person name="Lieutaud A."/>
            <person name="Lievremont D."/>
            <person name="Makita Y."/>
            <person name="Mangenot S."/>
            <person name="Nitschke W."/>
            <person name="Ortet P."/>
            <person name="Perdrial N."/>
            <person name="Schoepp B."/>
            <person name="Siguier P."/>
            <person name="Simeonova D.D."/>
            <person name="Rouy Z."/>
            <person name="Segurens B."/>
            <person name="Turlin E."/>
            <person name="Vallenet D."/>
            <person name="van Dorsselaer A."/>
            <person name="Weiss S."/>
            <person name="Weissenbach J."/>
            <person name="Lett M.-C."/>
            <person name="Danchin A."/>
            <person name="Bertin P.N."/>
        </authorList>
    </citation>
    <scope>NUCLEOTIDE SEQUENCE [LARGE SCALE GENOMIC DNA]</scope>
    <source>
        <strain>ULPAs1</strain>
    </source>
</reference>
<name>NUOH_HERAR</name>
<dbReference type="EC" id="7.1.1.-" evidence="1"/>
<dbReference type="EMBL" id="CU207211">
    <property type="protein sequence ID" value="CAL61974.1"/>
    <property type="molecule type" value="Genomic_DNA"/>
</dbReference>
<dbReference type="SMR" id="A4G637"/>
<dbReference type="STRING" id="204773.HEAR1819"/>
<dbReference type="KEGG" id="har:HEAR1819"/>
<dbReference type="eggNOG" id="COG1005">
    <property type="taxonomic scope" value="Bacteria"/>
</dbReference>
<dbReference type="HOGENOM" id="CLU_015134_0_1_4"/>
<dbReference type="OrthoDB" id="9803734at2"/>
<dbReference type="Proteomes" id="UP000006697">
    <property type="component" value="Chromosome"/>
</dbReference>
<dbReference type="GO" id="GO:0005886">
    <property type="term" value="C:plasma membrane"/>
    <property type="evidence" value="ECO:0007669"/>
    <property type="project" value="UniProtKB-SubCell"/>
</dbReference>
<dbReference type="GO" id="GO:0003954">
    <property type="term" value="F:NADH dehydrogenase activity"/>
    <property type="evidence" value="ECO:0007669"/>
    <property type="project" value="TreeGrafter"/>
</dbReference>
<dbReference type="GO" id="GO:0016655">
    <property type="term" value="F:oxidoreductase activity, acting on NAD(P)H, quinone or similar compound as acceptor"/>
    <property type="evidence" value="ECO:0007669"/>
    <property type="project" value="UniProtKB-UniRule"/>
</dbReference>
<dbReference type="GO" id="GO:0048038">
    <property type="term" value="F:quinone binding"/>
    <property type="evidence" value="ECO:0007669"/>
    <property type="project" value="UniProtKB-KW"/>
</dbReference>
<dbReference type="GO" id="GO:0009060">
    <property type="term" value="P:aerobic respiration"/>
    <property type="evidence" value="ECO:0007669"/>
    <property type="project" value="TreeGrafter"/>
</dbReference>
<dbReference type="HAMAP" id="MF_01350">
    <property type="entry name" value="NDH1_NuoH"/>
    <property type="match status" value="1"/>
</dbReference>
<dbReference type="InterPro" id="IPR001694">
    <property type="entry name" value="NADH_UbQ_OxRdtase_su1/FPO"/>
</dbReference>
<dbReference type="InterPro" id="IPR018086">
    <property type="entry name" value="NADH_UbQ_OxRdtase_su1_CS"/>
</dbReference>
<dbReference type="NCBIfam" id="NF004741">
    <property type="entry name" value="PRK06076.1-2"/>
    <property type="match status" value="1"/>
</dbReference>
<dbReference type="NCBIfam" id="NF004742">
    <property type="entry name" value="PRK06076.1-3"/>
    <property type="match status" value="1"/>
</dbReference>
<dbReference type="PANTHER" id="PTHR11432">
    <property type="entry name" value="NADH DEHYDROGENASE SUBUNIT 1"/>
    <property type="match status" value="1"/>
</dbReference>
<dbReference type="PANTHER" id="PTHR11432:SF3">
    <property type="entry name" value="NADH-UBIQUINONE OXIDOREDUCTASE CHAIN 1"/>
    <property type="match status" value="1"/>
</dbReference>
<dbReference type="Pfam" id="PF00146">
    <property type="entry name" value="NADHdh"/>
    <property type="match status" value="1"/>
</dbReference>
<dbReference type="PROSITE" id="PS00667">
    <property type="entry name" value="COMPLEX1_ND1_1"/>
    <property type="match status" value="1"/>
</dbReference>
<dbReference type="PROSITE" id="PS00668">
    <property type="entry name" value="COMPLEX1_ND1_2"/>
    <property type="match status" value="1"/>
</dbReference>